<dbReference type="EC" id="2.4.2.4" evidence="1"/>
<dbReference type="EMBL" id="AE005174">
    <property type="protein sequence ID" value="AAG59563.1"/>
    <property type="molecule type" value="Genomic_DNA"/>
</dbReference>
<dbReference type="EMBL" id="BA000007">
    <property type="protein sequence ID" value="BAB38764.1"/>
    <property type="molecule type" value="Genomic_DNA"/>
</dbReference>
<dbReference type="PIR" id="E91296">
    <property type="entry name" value="E91296"/>
</dbReference>
<dbReference type="PIR" id="G86137">
    <property type="entry name" value="G86137"/>
</dbReference>
<dbReference type="RefSeq" id="NP_313368.1">
    <property type="nucleotide sequence ID" value="NC_002695.1"/>
</dbReference>
<dbReference type="RefSeq" id="WP_000477811.1">
    <property type="nucleotide sequence ID" value="NZ_VOAI01000002.1"/>
</dbReference>
<dbReference type="SMR" id="Q8XB35"/>
<dbReference type="STRING" id="155864.Z5984"/>
<dbReference type="BindingDB" id="Q8XB35"/>
<dbReference type="GeneID" id="913506"/>
<dbReference type="GeneID" id="93777462"/>
<dbReference type="KEGG" id="ece:Z5984"/>
<dbReference type="KEGG" id="ecs:ECs_5341"/>
<dbReference type="PATRIC" id="fig|386585.9.peg.5588"/>
<dbReference type="eggNOG" id="COG0213">
    <property type="taxonomic scope" value="Bacteria"/>
</dbReference>
<dbReference type="HOGENOM" id="CLU_025040_0_1_6"/>
<dbReference type="OMA" id="VWGGATN"/>
<dbReference type="UniPathway" id="UPA00578">
    <property type="reaction ID" value="UER00638"/>
</dbReference>
<dbReference type="Proteomes" id="UP000000558">
    <property type="component" value="Chromosome"/>
</dbReference>
<dbReference type="Proteomes" id="UP000002519">
    <property type="component" value="Chromosome"/>
</dbReference>
<dbReference type="GO" id="GO:0005829">
    <property type="term" value="C:cytosol"/>
    <property type="evidence" value="ECO:0007669"/>
    <property type="project" value="TreeGrafter"/>
</dbReference>
<dbReference type="GO" id="GO:0004645">
    <property type="term" value="F:1,4-alpha-oligoglucan phosphorylase activity"/>
    <property type="evidence" value="ECO:0007669"/>
    <property type="project" value="InterPro"/>
</dbReference>
<dbReference type="GO" id="GO:0009032">
    <property type="term" value="F:thymidine phosphorylase activity"/>
    <property type="evidence" value="ECO:0007669"/>
    <property type="project" value="UniProtKB-UniRule"/>
</dbReference>
<dbReference type="GO" id="GO:0006206">
    <property type="term" value="P:pyrimidine nucleobase metabolic process"/>
    <property type="evidence" value="ECO:0007669"/>
    <property type="project" value="InterPro"/>
</dbReference>
<dbReference type="GO" id="GO:0046104">
    <property type="term" value="P:thymidine metabolic process"/>
    <property type="evidence" value="ECO:0007669"/>
    <property type="project" value="UniProtKB-UniRule"/>
</dbReference>
<dbReference type="FunFam" id="3.40.1030.10:FF:000001">
    <property type="entry name" value="Thymidine phosphorylase"/>
    <property type="match status" value="1"/>
</dbReference>
<dbReference type="FunFam" id="3.90.1170.30:FF:000001">
    <property type="entry name" value="Thymidine phosphorylase"/>
    <property type="match status" value="1"/>
</dbReference>
<dbReference type="Gene3D" id="3.40.1030.10">
    <property type="entry name" value="Nucleoside phosphorylase/phosphoribosyltransferase catalytic domain"/>
    <property type="match status" value="1"/>
</dbReference>
<dbReference type="Gene3D" id="3.90.1170.30">
    <property type="entry name" value="Pyrimidine nucleoside phosphorylase-like, C-terminal domain"/>
    <property type="match status" value="1"/>
</dbReference>
<dbReference type="Gene3D" id="1.20.970.10">
    <property type="entry name" value="Transferase, Pyrimidine Nucleoside Phosphorylase, Chain C"/>
    <property type="match status" value="1"/>
</dbReference>
<dbReference type="HAMAP" id="MF_01628">
    <property type="entry name" value="Thymid_phosp"/>
    <property type="match status" value="1"/>
</dbReference>
<dbReference type="InterPro" id="IPR000312">
    <property type="entry name" value="Glycosyl_Trfase_fam3"/>
</dbReference>
<dbReference type="InterPro" id="IPR017459">
    <property type="entry name" value="Glycosyl_Trfase_fam3_N_dom"/>
</dbReference>
<dbReference type="InterPro" id="IPR036320">
    <property type="entry name" value="Glycosyl_Trfase_fam3_N_dom_sf"/>
</dbReference>
<dbReference type="InterPro" id="IPR035902">
    <property type="entry name" value="Nuc_phospho_transferase"/>
</dbReference>
<dbReference type="InterPro" id="IPR036566">
    <property type="entry name" value="PYNP-like_C_sf"/>
</dbReference>
<dbReference type="InterPro" id="IPR013102">
    <property type="entry name" value="PYNP_C"/>
</dbReference>
<dbReference type="InterPro" id="IPR018090">
    <property type="entry name" value="Pyrmidine_PPas_bac/euk"/>
</dbReference>
<dbReference type="InterPro" id="IPR017872">
    <property type="entry name" value="Pyrmidine_PPase_CS"/>
</dbReference>
<dbReference type="InterPro" id="IPR000053">
    <property type="entry name" value="Thymidine/pyrmidine_PPase"/>
</dbReference>
<dbReference type="InterPro" id="IPR013465">
    <property type="entry name" value="Thymidine_Pase"/>
</dbReference>
<dbReference type="NCBIfam" id="NF004490">
    <property type="entry name" value="PRK05820.1"/>
    <property type="match status" value="1"/>
</dbReference>
<dbReference type="NCBIfam" id="TIGR02643">
    <property type="entry name" value="T_phosphoryl"/>
    <property type="match status" value="1"/>
</dbReference>
<dbReference type="NCBIfam" id="TIGR02644">
    <property type="entry name" value="Y_phosphoryl"/>
    <property type="match status" value="1"/>
</dbReference>
<dbReference type="PANTHER" id="PTHR10515">
    <property type="entry name" value="THYMIDINE PHOSPHORYLASE"/>
    <property type="match status" value="1"/>
</dbReference>
<dbReference type="PANTHER" id="PTHR10515:SF0">
    <property type="entry name" value="THYMIDINE PHOSPHORYLASE"/>
    <property type="match status" value="1"/>
</dbReference>
<dbReference type="Pfam" id="PF02885">
    <property type="entry name" value="Glycos_trans_3N"/>
    <property type="match status" value="1"/>
</dbReference>
<dbReference type="Pfam" id="PF00591">
    <property type="entry name" value="Glycos_transf_3"/>
    <property type="match status" value="1"/>
</dbReference>
<dbReference type="Pfam" id="PF07831">
    <property type="entry name" value="PYNP_C"/>
    <property type="match status" value="1"/>
</dbReference>
<dbReference type="PIRSF" id="PIRSF000478">
    <property type="entry name" value="TP_PyNP"/>
    <property type="match status" value="1"/>
</dbReference>
<dbReference type="SMART" id="SM00941">
    <property type="entry name" value="PYNP_C"/>
    <property type="match status" value="1"/>
</dbReference>
<dbReference type="SUPFAM" id="SSF52418">
    <property type="entry name" value="Nucleoside phosphorylase/phosphoribosyltransferase catalytic domain"/>
    <property type="match status" value="1"/>
</dbReference>
<dbReference type="SUPFAM" id="SSF47648">
    <property type="entry name" value="Nucleoside phosphorylase/phosphoribosyltransferase N-terminal domain"/>
    <property type="match status" value="1"/>
</dbReference>
<dbReference type="SUPFAM" id="SSF54680">
    <property type="entry name" value="Pyrimidine nucleoside phosphorylase C-terminal domain"/>
    <property type="match status" value="1"/>
</dbReference>
<dbReference type="PROSITE" id="PS00647">
    <property type="entry name" value="THYMID_PHOSPHORYLASE"/>
    <property type="match status" value="1"/>
</dbReference>
<sequence length="440" mass="47180">MFLAQEIIRKKRDGHALSDEEIRFFINGIRDNTISEGQIAALAMTIFFHDMTMPERVSLTMAMRDSGTVLDWKSLHLNGPIVDKHSTGGVGDVTSLMLGPMVAACGGYIPMISGRGLGHTGGTLDKLESIPGFDIFPDDNRFREIIKDVGVAIIGQTSSLAPADKRFYATRDITATVDSIPLITASILAKKLAEGLDALVMDVKVGSGAFMPTYELSEALAEAIVGVANGAGVRTTALLTDMNQVLASSAGNAVEVREAVQFLTGEYRNPRLFDVTMALCVEMLISGKLAKDDAEARAKLQAVLDNGKAAEVFGRMVAAQKGPTDFVENYAKYLPTAMLTKAVYADTEGFVSEMDTRALGMAVVAMGGGRRQASDTIDYSVGFTDMARLGDQVDGQRPLAVIHAKDENSWQEAAKAVKAAIKLADKAPESTPTVYRRISE</sequence>
<name>TYPH_ECO57</name>
<reference key="1">
    <citation type="journal article" date="2001" name="Nature">
        <title>Genome sequence of enterohaemorrhagic Escherichia coli O157:H7.</title>
        <authorList>
            <person name="Perna N.T."/>
            <person name="Plunkett G. III"/>
            <person name="Burland V."/>
            <person name="Mau B."/>
            <person name="Glasner J.D."/>
            <person name="Rose D.J."/>
            <person name="Mayhew G.F."/>
            <person name="Evans P.S."/>
            <person name="Gregor J."/>
            <person name="Kirkpatrick H.A."/>
            <person name="Posfai G."/>
            <person name="Hackett J."/>
            <person name="Klink S."/>
            <person name="Boutin A."/>
            <person name="Shao Y."/>
            <person name="Miller L."/>
            <person name="Grotbeck E.J."/>
            <person name="Davis N.W."/>
            <person name="Lim A."/>
            <person name="Dimalanta E.T."/>
            <person name="Potamousis K."/>
            <person name="Apodaca J."/>
            <person name="Anantharaman T.S."/>
            <person name="Lin J."/>
            <person name="Yen G."/>
            <person name="Schwartz D.C."/>
            <person name="Welch R.A."/>
            <person name="Blattner F.R."/>
        </authorList>
    </citation>
    <scope>NUCLEOTIDE SEQUENCE [LARGE SCALE GENOMIC DNA]</scope>
    <source>
        <strain>O157:H7 / EDL933 / ATCC 700927 / EHEC</strain>
    </source>
</reference>
<reference key="2">
    <citation type="journal article" date="2001" name="DNA Res.">
        <title>Complete genome sequence of enterohemorrhagic Escherichia coli O157:H7 and genomic comparison with a laboratory strain K-12.</title>
        <authorList>
            <person name="Hayashi T."/>
            <person name="Makino K."/>
            <person name="Ohnishi M."/>
            <person name="Kurokawa K."/>
            <person name="Ishii K."/>
            <person name="Yokoyama K."/>
            <person name="Han C.-G."/>
            <person name="Ohtsubo E."/>
            <person name="Nakayama K."/>
            <person name="Murata T."/>
            <person name="Tanaka M."/>
            <person name="Tobe T."/>
            <person name="Iida T."/>
            <person name="Takami H."/>
            <person name="Honda T."/>
            <person name="Sasakawa C."/>
            <person name="Ogasawara N."/>
            <person name="Yasunaga T."/>
            <person name="Kuhara S."/>
            <person name="Shiba T."/>
            <person name="Hattori M."/>
            <person name="Shinagawa H."/>
        </authorList>
    </citation>
    <scope>NUCLEOTIDE SEQUENCE [LARGE SCALE GENOMIC DNA]</scope>
    <source>
        <strain>O157:H7 / Sakai / RIMD 0509952 / EHEC</strain>
    </source>
</reference>
<feature type="chain" id="PRO_0000059055" description="Thymidine phosphorylase">
    <location>
        <begin position="1"/>
        <end position="440"/>
    </location>
</feature>
<evidence type="ECO:0000255" key="1">
    <source>
        <dbReference type="HAMAP-Rule" id="MF_01628"/>
    </source>
</evidence>
<comment type="function">
    <text evidence="1">The enzymes which catalyze the reversible phosphorolysis of pyrimidine nucleosides are involved in the degradation of these compounds and in their utilization as carbon and energy sources, or in the rescue of pyrimidine bases for nucleotide synthesis.</text>
</comment>
<comment type="catalytic activity">
    <reaction evidence="1">
        <text>thymidine + phosphate = 2-deoxy-alpha-D-ribose 1-phosphate + thymine</text>
        <dbReference type="Rhea" id="RHEA:16037"/>
        <dbReference type="ChEBI" id="CHEBI:17748"/>
        <dbReference type="ChEBI" id="CHEBI:17821"/>
        <dbReference type="ChEBI" id="CHEBI:43474"/>
        <dbReference type="ChEBI" id="CHEBI:57259"/>
        <dbReference type="EC" id="2.4.2.4"/>
    </reaction>
</comment>
<comment type="pathway">
    <text evidence="1">Pyrimidine metabolism; dTMP biosynthesis via salvage pathway; dTMP from thymine: step 1/2.</text>
</comment>
<comment type="subunit">
    <text evidence="1">Homodimer.</text>
</comment>
<comment type="similarity">
    <text evidence="1">Belongs to the thymidine/pyrimidine-nucleoside phosphorylase family.</text>
</comment>
<keyword id="KW-0328">Glycosyltransferase</keyword>
<keyword id="KW-1185">Reference proteome</keyword>
<keyword id="KW-0808">Transferase</keyword>
<gene>
    <name evidence="1" type="primary">deoA</name>
    <name type="ordered locus">Z5984</name>
    <name type="ordered locus">ECs5341</name>
</gene>
<accession>Q8XB35</accession>
<accession>Q8X2H2</accession>
<protein>
    <recommendedName>
        <fullName evidence="1">Thymidine phosphorylase</fullName>
        <ecNumber evidence="1">2.4.2.4</ecNumber>
    </recommendedName>
    <alternativeName>
        <fullName evidence="1">TdRPase</fullName>
    </alternativeName>
</protein>
<proteinExistence type="inferred from homology"/>
<organism>
    <name type="scientific">Escherichia coli O157:H7</name>
    <dbReference type="NCBI Taxonomy" id="83334"/>
    <lineage>
        <taxon>Bacteria</taxon>
        <taxon>Pseudomonadati</taxon>
        <taxon>Pseudomonadota</taxon>
        <taxon>Gammaproteobacteria</taxon>
        <taxon>Enterobacterales</taxon>
        <taxon>Enterobacteriaceae</taxon>
        <taxon>Escherichia</taxon>
    </lineage>
</organism>